<protein>
    <recommendedName>
        <fullName evidence="1">Undecaprenyl-diphosphatase</fullName>
        <ecNumber evidence="1">3.6.1.27</ecNumber>
    </recommendedName>
    <alternativeName>
        <fullName evidence="1">Bacitracin resistance protein</fullName>
    </alternativeName>
    <alternativeName>
        <fullName evidence="1">Undecaprenyl pyrophosphate phosphatase</fullName>
    </alternativeName>
</protein>
<sequence length="263" mass="28551">MSFLHAILLGLLQGLTEFLPVSSSGHLAIAQHFLPGFSQPGVLFDVLLHAGTMAAVLVYFRYDCRHLALAYFRPHEEAHQYRRLLRLLIIATVPTAIIGLSFKDFFVGAFHNLPLISLMLVVTGGLLFFSERLRKNGRSQGHLQHWDALIAGVAQAGAIMPGISRSGSTISVLLFKGVSGETAARFSFLMALPAVFGATLVSLLEWPAGVSAEIPVYAAGAVMAFLSGLASIHLLMGVVRRRRLYAFAVYCWLMGGMFFAISS</sequence>
<reference key="1">
    <citation type="submission" date="2005-10" db="EMBL/GenBank/DDBJ databases">
        <title>Complete sequence of Pelobacter carbinolicus DSM 2380.</title>
        <authorList>
            <person name="Copeland A."/>
            <person name="Lucas S."/>
            <person name="Lapidus A."/>
            <person name="Barry K."/>
            <person name="Detter J.C."/>
            <person name="Glavina T."/>
            <person name="Hammon N."/>
            <person name="Israni S."/>
            <person name="Pitluck S."/>
            <person name="Chertkov O."/>
            <person name="Schmutz J."/>
            <person name="Larimer F."/>
            <person name="Land M."/>
            <person name="Kyrpides N."/>
            <person name="Ivanova N."/>
            <person name="Richardson P."/>
        </authorList>
    </citation>
    <scope>NUCLEOTIDE SEQUENCE [LARGE SCALE GENOMIC DNA]</scope>
    <source>
        <strain>DSM 2380 / NBRC 103641 / GraBd1</strain>
    </source>
</reference>
<name>UPPP_SYNC1</name>
<gene>
    <name evidence="1" type="primary">uppP</name>
    <name type="ordered locus">Pcar_0646</name>
</gene>
<evidence type="ECO:0000255" key="1">
    <source>
        <dbReference type="HAMAP-Rule" id="MF_01006"/>
    </source>
</evidence>
<dbReference type="EC" id="3.6.1.27" evidence="1"/>
<dbReference type="EMBL" id="CP000142">
    <property type="protein sequence ID" value="ABA87905.1"/>
    <property type="molecule type" value="Genomic_DNA"/>
</dbReference>
<dbReference type="RefSeq" id="WP_011340348.1">
    <property type="nucleotide sequence ID" value="NC_007498.2"/>
</dbReference>
<dbReference type="SMR" id="Q3A6V2"/>
<dbReference type="STRING" id="338963.Pcar_0646"/>
<dbReference type="KEGG" id="pca:Pcar_0646"/>
<dbReference type="eggNOG" id="COG1968">
    <property type="taxonomic scope" value="Bacteria"/>
</dbReference>
<dbReference type="HOGENOM" id="CLU_060296_1_2_7"/>
<dbReference type="OrthoDB" id="9808289at2"/>
<dbReference type="Proteomes" id="UP000002534">
    <property type="component" value="Chromosome"/>
</dbReference>
<dbReference type="GO" id="GO:0005886">
    <property type="term" value="C:plasma membrane"/>
    <property type="evidence" value="ECO:0007669"/>
    <property type="project" value="UniProtKB-SubCell"/>
</dbReference>
<dbReference type="GO" id="GO:0050380">
    <property type="term" value="F:undecaprenyl-diphosphatase activity"/>
    <property type="evidence" value="ECO:0007669"/>
    <property type="project" value="UniProtKB-UniRule"/>
</dbReference>
<dbReference type="GO" id="GO:0071555">
    <property type="term" value="P:cell wall organization"/>
    <property type="evidence" value="ECO:0007669"/>
    <property type="project" value="UniProtKB-KW"/>
</dbReference>
<dbReference type="GO" id="GO:0009252">
    <property type="term" value="P:peptidoglycan biosynthetic process"/>
    <property type="evidence" value="ECO:0007669"/>
    <property type="project" value="UniProtKB-KW"/>
</dbReference>
<dbReference type="GO" id="GO:0008360">
    <property type="term" value="P:regulation of cell shape"/>
    <property type="evidence" value="ECO:0007669"/>
    <property type="project" value="UniProtKB-KW"/>
</dbReference>
<dbReference type="GO" id="GO:0046677">
    <property type="term" value="P:response to antibiotic"/>
    <property type="evidence" value="ECO:0007669"/>
    <property type="project" value="UniProtKB-UniRule"/>
</dbReference>
<dbReference type="HAMAP" id="MF_01006">
    <property type="entry name" value="Undec_diphosphatase"/>
    <property type="match status" value="1"/>
</dbReference>
<dbReference type="InterPro" id="IPR003824">
    <property type="entry name" value="UppP"/>
</dbReference>
<dbReference type="PANTHER" id="PTHR30622">
    <property type="entry name" value="UNDECAPRENYL-DIPHOSPHATASE"/>
    <property type="match status" value="1"/>
</dbReference>
<dbReference type="PANTHER" id="PTHR30622:SF4">
    <property type="entry name" value="UNDECAPRENYL-DIPHOSPHATASE"/>
    <property type="match status" value="1"/>
</dbReference>
<dbReference type="Pfam" id="PF02673">
    <property type="entry name" value="BacA"/>
    <property type="match status" value="1"/>
</dbReference>
<feature type="chain" id="PRO_0000227624" description="Undecaprenyl-diphosphatase">
    <location>
        <begin position="1"/>
        <end position="263"/>
    </location>
</feature>
<feature type="transmembrane region" description="Helical" evidence="1">
    <location>
        <begin position="40"/>
        <end position="60"/>
    </location>
</feature>
<feature type="transmembrane region" description="Helical" evidence="1">
    <location>
        <begin position="87"/>
        <end position="107"/>
    </location>
</feature>
<feature type="transmembrane region" description="Helical" evidence="1">
    <location>
        <begin position="109"/>
        <end position="129"/>
    </location>
</feature>
<feature type="transmembrane region" description="Helical" evidence="1">
    <location>
        <begin position="186"/>
        <end position="206"/>
    </location>
</feature>
<feature type="transmembrane region" description="Helical" evidence="1">
    <location>
        <begin position="219"/>
        <end position="239"/>
    </location>
</feature>
<feature type="transmembrane region" description="Helical" evidence="1">
    <location>
        <begin position="243"/>
        <end position="263"/>
    </location>
</feature>
<organism>
    <name type="scientific">Syntrophotalea carbinolica (strain DSM 2380 / NBRC 103641 / GraBd1)</name>
    <name type="common">Pelobacter carbinolicus</name>
    <dbReference type="NCBI Taxonomy" id="338963"/>
    <lineage>
        <taxon>Bacteria</taxon>
        <taxon>Pseudomonadati</taxon>
        <taxon>Thermodesulfobacteriota</taxon>
        <taxon>Desulfuromonadia</taxon>
        <taxon>Desulfuromonadales</taxon>
        <taxon>Syntrophotaleaceae</taxon>
        <taxon>Syntrophotalea</taxon>
    </lineage>
</organism>
<keyword id="KW-0046">Antibiotic resistance</keyword>
<keyword id="KW-0997">Cell inner membrane</keyword>
<keyword id="KW-1003">Cell membrane</keyword>
<keyword id="KW-0133">Cell shape</keyword>
<keyword id="KW-0961">Cell wall biogenesis/degradation</keyword>
<keyword id="KW-0378">Hydrolase</keyword>
<keyword id="KW-0472">Membrane</keyword>
<keyword id="KW-0573">Peptidoglycan synthesis</keyword>
<keyword id="KW-1185">Reference proteome</keyword>
<keyword id="KW-0812">Transmembrane</keyword>
<keyword id="KW-1133">Transmembrane helix</keyword>
<comment type="function">
    <text evidence="1">Catalyzes the dephosphorylation of undecaprenyl diphosphate (UPP). Confers resistance to bacitracin.</text>
</comment>
<comment type="catalytic activity">
    <reaction evidence="1">
        <text>di-trans,octa-cis-undecaprenyl diphosphate + H2O = di-trans,octa-cis-undecaprenyl phosphate + phosphate + H(+)</text>
        <dbReference type="Rhea" id="RHEA:28094"/>
        <dbReference type="ChEBI" id="CHEBI:15377"/>
        <dbReference type="ChEBI" id="CHEBI:15378"/>
        <dbReference type="ChEBI" id="CHEBI:43474"/>
        <dbReference type="ChEBI" id="CHEBI:58405"/>
        <dbReference type="ChEBI" id="CHEBI:60392"/>
        <dbReference type="EC" id="3.6.1.27"/>
    </reaction>
</comment>
<comment type="subcellular location">
    <subcellularLocation>
        <location evidence="1">Cell inner membrane</location>
        <topology evidence="1">Multi-pass membrane protein</topology>
    </subcellularLocation>
</comment>
<comment type="miscellaneous">
    <text>Bacitracin is thought to be involved in the inhibition of peptidoglycan synthesis by sequestering undecaprenyl diphosphate, thereby reducing the pool of lipid carrier available.</text>
</comment>
<comment type="similarity">
    <text evidence="1">Belongs to the UppP family.</text>
</comment>
<accession>Q3A6V2</accession>
<proteinExistence type="inferred from homology"/>